<organism>
    <name type="scientific">Neisseria meningitidis serogroup A / serotype 4A (strain DSM 15465 / Z2491)</name>
    <dbReference type="NCBI Taxonomy" id="122587"/>
    <lineage>
        <taxon>Bacteria</taxon>
        <taxon>Pseudomonadati</taxon>
        <taxon>Pseudomonadota</taxon>
        <taxon>Betaproteobacteria</taxon>
        <taxon>Neisseriales</taxon>
        <taxon>Neisseriaceae</taxon>
        <taxon>Neisseria</taxon>
    </lineage>
</organism>
<protein>
    <recommendedName>
        <fullName evidence="1">tRNA/tmRNA (uracil-C(5))-methyltransferase</fullName>
        <ecNumber evidence="1">2.1.1.-</ecNumber>
        <ecNumber evidence="1">2.1.1.35</ecNumber>
    </recommendedName>
    <alternativeName>
        <fullName evidence="1">tRNA (uracil(54)-C(5))-methyltransferase</fullName>
    </alternativeName>
    <alternativeName>
        <fullName evidence="1">tRNA(m5U54)-methyltransferase</fullName>
        <shortName evidence="1">RUMT</shortName>
    </alternativeName>
    <alternativeName>
        <fullName evidence="1">tmRNA (uracil(341)-C(5))-methyltransferase</fullName>
    </alternativeName>
</protein>
<feature type="chain" id="PRO_0000161867" description="tRNA/tmRNA (uracil-C(5))-methyltransferase">
    <location>
        <begin position="1"/>
        <end position="362"/>
    </location>
</feature>
<feature type="active site" description="Nucleophile" evidence="1">
    <location>
        <position position="318"/>
    </location>
</feature>
<feature type="active site" description="Proton acceptor" evidence="1">
    <location>
        <position position="352"/>
    </location>
</feature>
<feature type="binding site" evidence="1">
    <location>
        <position position="182"/>
    </location>
    <ligand>
        <name>S-adenosyl-L-methionine</name>
        <dbReference type="ChEBI" id="CHEBI:59789"/>
    </ligand>
</feature>
<feature type="binding site" evidence="1">
    <location>
        <position position="210"/>
    </location>
    <ligand>
        <name>S-adenosyl-L-methionine</name>
        <dbReference type="ChEBI" id="CHEBI:59789"/>
    </ligand>
</feature>
<feature type="binding site" evidence="1">
    <location>
        <position position="215"/>
    </location>
    <ligand>
        <name>S-adenosyl-L-methionine</name>
        <dbReference type="ChEBI" id="CHEBI:59789"/>
    </ligand>
</feature>
<feature type="binding site" evidence="1">
    <location>
        <position position="231"/>
    </location>
    <ligand>
        <name>S-adenosyl-L-methionine</name>
        <dbReference type="ChEBI" id="CHEBI:59789"/>
    </ligand>
</feature>
<feature type="binding site" evidence="1">
    <location>
        <position position="293"/>
    </location>
    <ligand>
        <name>S-adenosyl-L-methionine</name>
        <dbReference type="ChEBI" id="CHEBI:59789"/>
    </ligand>
</feature>
<proteinExistence type="inferred from homology"/>
<name>TRMA_NEIMA</name>
<reference key="1">
    <citation type="journal article" date="2000" name="Nature">
        <title>Complete DNA sequence of a serogroup A strain of Neisseria meningitidis Z2491.</title>
        <authorList>
            <person name="Parkhill J."/>
            <person name="Achtman M."/>
            <person name="James K.D."/>
            <person name="Bentley S.D."/>
            <person name="Churcher C.M."/>
            <person name="Klee S.R."/>
            <person name="Morelli G."/>
            <person name="Basham D."/>
            <person name="Brown D."/>
            <person name="Chillingworth T."/>
            <person name="Davies R.M."/>
            <person name="Davis P."/>
            <person name="Devlin K."/>
            <person name="Feltwell T."/>
            <person name="Hamlin N."/>
            <person name="Holroyd S."/>
            <person name="Jagels K."/>
            <person name="Leather S."/>
            <person name="Moule S."/>
            <person name="Mungall K.L."/>
            <person name="Quail M.A."/>
            <person name="Rajandream M.A."/>
            <person name="Rutherford K.M."/>
            <person name="Simmonds M."/>
            <person name="Skelton J."/>
            <person name="Whitehead S."/>
            <person name="Spratt B.G."/>
            <person name="Barrell B.G."/>
        </authorList>
    </citation>
    <scope>NUCLEOTIDE SEQUENCE [LARGE SCALE GENOMIC DNA]</scope>
    <source>
        <strain>DSM 15465 / Z2491</strain>
    </source>
</reference>
<dbReference type="EC" id="2.1.1.-" evidence="1"/>
<dbReference type="EC" id="2.1.1.35" evidence="1"/>
<dbReference type="EMBL" id="AL157959">
    <property type="protein sequence ID" value="CAM09050.1"/>
    <property type="molecule type" value="Genomic_DNA"/>
</dbReference>
<dbReference type="PIR" id="H81821">
    <property type="entry name" value="H81821"/>
</dbReference>
<dbReference type="RefSeq" id="WP_002212643.1">
    <property type="nucleotide sequence ID" value="NC_003116.1"/>
</dbReference>
<dbReference type="SMR" id="Q9JT82"/>
<dbReference type="EnsemblBacteria" id="CAM09050">
    <property type="protein sequence ID" value="CAM09050"/>
    <property type="gene ID" value="NMA1938"/>
</dbReference>
<dbReference type="KEGG" id="nma:NMA1938"/>
<dbReference type="HOGENOM" id="CLU_043022_0_0_4"/>
<dbReference type="Proteomes" id="UP000000626">
    <property type="component" value="Chromosome"/>
</dbReference>
<dbReference type="GO" id="GO:0005829">
    <property type="term" value="C:cytosol"/>
    <property type="evidence" value="ECO:0007669"/>
    <property type="project" value="TreeGrafter"/>
</dbReference>
<dbReference type="GO" id="GO:0019843">
    <property type="term" value="F:rRNA binding"/>
    <property type="evidence" value="ECO:0007669"/>
    <property type="project" value="TreeGrafter"/>
</dbReference>
<dbReference type="GO" id="GO:0030697">
    <property type="term" value="F:tRNA (uracil(54)-C5)-methyltransferase activity, S-adenosyl methionine-dependent"/>
    <property type="evidence" value="ECO:0007669"/>
    <property type="project" value="UniProtKB-UniRule"/>
</dbReference>
<dbReference type="GO" id="GO:0000049">
    <property type="term" value="F:tRNA binding"/>
    <property type="evidence" value="ECO:0007669"/>
    <property type="project" value="TreeGrafter"/>
</dbReference>
<dbReference type="GO" id="GO:0030488">
    <property type="term" value="P:tRNA methylation"/>
    <property type="evidence" value="ECO:0007669"/>
    <property type="project" value="UniProtKB-UniRule"/>
</dbReference>
<dbReference type="CDD" id="cd02440">
    <property type="entry name" value="AdoMet_MTases"/>
    <property type="match status" value="1"/>
</dbReference>
<dbReference type="FunFam" id="2.40.50.1070:FF:000001">
    <property type="entry name" value="tRNA/tmRNA (uracil-C(5))-methyltransferase"/>
    <property type="match status" value="1"/>
</dbReference>
<dbReference type="FunFam" id="3.40.50.150:FF:000012">
    <property type="entry name" value="tRNA/tmRNA (uracil-C(5))-methyltransferase"/>
    <property type="match status" value="1"/>
</dbReference>
<dbReference type="Gene3D" id="2.40.50.1070">
    <property type="match status" value="1"/>
</dbReference>
<dbReference type="Gene3D" id="3.40.50.150">
    <property type="entry name" value="Vaccinia Virus protein VP39"/>
    <property type="match status" value="1"/>
</dbReference>
<dbReference type="HAMAP" id="MF_01011">
    <property type="entry name" value="RNA_methyltr_TrmA"/>
    <property type="match status" value="1"/>
</dbReference>
<dbReference type="InterPro" id="IPR030390">
    <property type="entry name" value="MeTrfase_TrmA_AS"/>
</dbReference>
<dbReference type="InterPro" id="IPR029063">
    <property type="entry name" value="SAM-dependent_MTases_sf"/>
</dbReference>
<dbReference type="InterPro" id="IPR011869">
    <property type="entry name" value="TrmA_MeTrfase"/>
</dbReference>
<dbReference type="InterPro" id="IPR010280">
    <property type="entry name" value="U5_MeTrfase_fam"/>
</dbReference>
<dbReference type="NCBIfam" id="TIGR02143">
    <property type="entry name" value="trmA_only"/>
    <property type="match status" value="1"/>
</dbReference>
<dbReference type="PANTHER" id="PTHR47790">
    <property type="entry name" value="TRNA/TMRNA (URACIL-C(5))-METHYLTRANSFERASE"/>
    <property type="match status" value="1"/>
</dbReference>
<dbReference type="PANTHER" id="PTHR47790:SF2">
    <property type="entry name" value="TRNA_TMRNA (URACIL-C(5))-METHYLTRANSFERASE"/>
    <property type="match status" value="1"/>
</dbReference>
<dbReference type="Pfam" id="PF05958">
    <property type="entry name" value="tRNA_U5-meth_tr"/>
    <property type="match status" value="1"/>
</dbReference>
<dbReference type="SUPFAM" id="SSF53335">
    <property type="entry name" value="S-adenosyl-L-methionine-dependent methyltransferases"/>
    <property type="match status" value="1"/>
</dbReference>
<dbReference type="PROSITE" id="PS51687">
    <property type="entry name" value="SAM_MT_RNA_M5U"/>
    <property type="match status" value="1"/>
</dbReference>
<dbReference type="PROSITE" id="PS01230">
    <property type="entry name" value="TRMA_1"/>
    <property type="match status" value="1"/>
</dbReference>
<accession>Q9JT82</accession>
<accession>A1ITD6</accession>
<gene>
    <name evidence="1" type="primary">trmA</name>
    <name type="ordered locus">NMA1938</name>
</gene>
<evidence type="ECO:0000255" key="1">
    <source>
        <dbReference type="HAMAP-Rule" id="MF_01011"/>
    </source>
</evidence>
<sequence>MSDYTQQLQDKKDHLKTLFAGLDVPEWEVYESPDKHYRMRAEFRIWHEGGEMFYAMFEKGQKAGGASLIRCDRFEAASEAVNRLMPELIAVAAQSAELRNRWYAVEFLSTLSGEMLVTMIYHKRLDDEWMQAAQALQQQLDTSVIGRSRGQKIVLKQDYVTETLKVGNRDFRYRQIEGGFTQPNAAVCQKMLEWACGAAEGLGGDLLELYCGNGNFTLPLSEKFERVLATEISKTSVGAAQWNIEANGIGNIKIARLSAEEFTEAYTGKREFARLKDGGIALTDYAFSTIFVDPPRAGIDEETLKLVSQFDNIIYISCNPETLRANLDTLVETHVVERAALFDQFPFTHHIESGVLLKKKIL</sequence>
<comment type="function">
    <text evidence="1">Dual-specificity methyltransferase that catalyzes the formation of 5-methyluridine at position 54 (m5U54) in all tRNAs, and that of position 341 (m5U341) in tmRNA (transfer-mRNA).</text>
</comment>
<comment type="catalytic activity">
    <reaction evidence="1">
        <text>uridine(54) in tRNA + S-adenosyl-L-methionine = 5-methyluridine(54) in tRNA + S-adenosyl-L-homocysteine + H(+)</text>
        <dbReference type="Rhea" id="RHEA:42712"/>
        <dbReference type="Rhea" id="RHEA-COMP:10167"/>
        <dbReference type="Rhea" id="RHEA-COMP:10193"/>
        <dbReference type="ChEBI" id="CHEBI:15378"/>
        <dbReference type="ChEBI" id="CHEBI:57856"/>
        <dbReference type="ChEBI" id="CHEBI:59789"/>
        <dbReference type="ChEBI" id="CHEBI:65315"/>
        <dbReference type="ChEBI" id="CHEBI:74447"/>
        <dbReference type="EC" id="2.1.1.35"/>
    </reaction>
</comment>
<comment type="catalytic activity">
    <reaction evidence="1">
        <text>uridine(341) in tmRNA + S-adenosyl-L-methionine = 5-methyluridine(341) in tmRNA + S-adenosyl-L-homocysteine + H(+)</text>
        <dbReference type="Rhea" id="RHEA:43612"/>
        <dbReference type="Rhea" id="RHEA-COMP:10630"/>
        <dbReference type="Rhea" id="RHEA-COMP:10631"/>
        <dbReference type="ChEBI" id="CHEBI:15378"/>
        <dbReference type="ChEBI" id="CHEBI:57856"/>
        <dbReference type="ChEBI" id="CHEBI:59789"/>
        <dbReference type="ChEBI" id="CHEBI:65315"/>
        <dbReference type="ChEBI" id="CHEBI:74447"/>
    </reaction>
</comment>
<comment type="similarity">
    <text evidence="1">Belongs to the class I-like SAM-binding methyltransferase superfamily. RNA M5U methyltransferase family. TrmA subfamily.</text>
</comment>
<keyword id="KW-0489">Methyltransferase</keyword>
<keyword id="KW-0949">S-adenosyl-L-methionine</keyword>
<keyword id="KW-0808">Transferase</keyword>
<keyword id="KW-0819">tRNA processing</keyword>